<evidence type="ECO:0000255" key="1">
    <source>
        <dbReference type="HAMAP-Rule" id="MF_01405"/>
    </source>
</evidence>
<proteinExistence type="inferred from homology"/>
<gene>
    <name type="ordered locus">GK2665</name>
</gene>
<accession>Q5KWI6</accession>
<comment type="function">
    <text evidence="1">Pyrophosphatase that catalyzes the hydrolysis of nucleoside triphosphates to their monophosphate derivatives, with a high preference for the non-canonical purine nucleotides XTP (xanthosine triphosphate), dITP (deoxyinosine triphosphate) and ITP. Seems to function as a house-cleaning enzyme that removes non-canonical purine nucleotides from the nucleotide pool, thus preventing their incorporation into DNA/RNA and avoiding chromosomal lesions.</text>
</comment>
<comment type="catalytic activity">
    <reaction evidence="1">
        <text>XTP + H2O = XMP + diphosphate + H(+)</text>
        <dbReference type="Rhea" id="RHEA:28610"/>
        <dbReference type="ChEBI" id="CHEBI:15377"/>
        <dbReference type="ChEBI" id="CHEBI:15378"/>
        <dbReference type="ChEBI" id="CHEBI:33019"/>
        <dbReference type="ChEBI" id="CHEBI:57464"/>
        <dbReference type="ChEBI" id="CHEBI:61314"/>
        <dbReference type="EC" id="3.6.1.66"/>
    </reaction>
</comment>
<comment type="catalytic activity">
    <reaction evidence="1">
        <text>dITP + H2O = dIMP + diphosphate + H(+)</text>
        <dbReference type="Rhea" id="RHEA:28342"/>
        <dbReference type="ChEBI" id="CHEBI:15377"/>
        <dbReference type="ChEBI" id="CHEBI:15378"/>
        <dbReference type="ChEBI" id="CHEBI:33019"/>
        <dbReference type="ChEBI" id="CHEBI:61194"/>
        <dbReference type="ChEBI" id="CHEBI:61382"/>
        <dbReference type="EC" id="3.6.1.66"/>
    </reaction>
</comment>
<comment type="catalytic activity">
    <reaction evidence="1">
        <text>ITP + H2O = IMP + diphosphate + H(+)</text>
        <dbReference type="Rhea" id="RHEA:29399"/>
        <dbReference type="ChEBI" id="CHEBI:15377"/>
        <dbReference type="ChEBI" id="CHEBI:15378"/>
        <dbReference type="ChEBI" id="CHEBI:33019"/>
        <dbReference type="ChEBI" id="CHEBI:58053"/>
        <dbReference type="ChEBI" id="CHEBI:61402"/>
        <dbReference type="EC" id="3.6.1.66"/>
    </reaction>
</comment>
<comment type="cofactor">
    <cofactor evidence="1">
        <name>Mg(2+)</name>
        <dbReference type="ChEBI" id="CHEBI:18420"/>
    </cofactor>
    <text evidence="1">Binds 1 Mg(2+) ion per subunit.</text>
</comment>
<comment type="subunit">
    <text evidence="1">Homodimer.</text>
</comment>
<comment type="similarity">
    <text evidence="1">Belongs to the HAM1 NTPase family.</text>
</comment>
<name>IXTPA_GEOKA</name>
<feature type="chain" id="PRO_0000178169" description="dITP/XTP pyrophosphatase">
    <location>
        <begin position="1"/>
        <end position="204"/>
    </location>
</feature>
<feature type="active site" description="Proton acceptor" evidence="1">
    <location>
        <position position="70"/>
    </location>
</feature>
<feature type="binding site" evidence="1">
    <location>
        <begin position="8"/>
        <end position="13"/>
    </location>
    <ligand>
        <name>substrate</name>
    </ligand>
</feature>
<feature type="binding site" evidence="1">
    <location>
        <position position="70"/>
    </location>
    <ligand>
        <name>Mg(2+)</name>
        <dbReference type="ChEBI" id="CHEBI:18420"/>
    </ligand>
</feature>
<feature type="binding site" evidence="1">
    <location>
        <position position="71"/>
    </location>
    <ligand>
        <name>substrate</name>
    </ligand>
</feature>
<feature type="binding site" evidence="1">
    <location>
        <begin position="153"/>
        <end position="156"/>
    </location>
    <ligand>
        <name>substrate</name>
    </ligand>
</feature>
<feature type="binding site" evidence="1">
    <location>
        <position position="176"/>
    </location>
    <ligand>
        <name>substrate</name>
    </ligand>
</feature>
<feature type="binding site" evidence="1">
    <location>
        <begin position="181"/>
        <end position="182"/>
    </location>
    <ligand>
        <name>substrate</name>
    </ligand>
</feature>
<dbReference type="EC" id="3.6.1.66" evidence="1"/>
<dbReference type="EMBL" id="BA000043">
    <property type="protein sequence ID" value="BAD76950.1"/>
    <property type="molecule type" value="Genomic_DNA"/>
</dbReference>
<dbReference type="RefSeq" id="WP_011232140.1">
    <property type="nucleotide sequence ID" value="NC_006510.1"/>
</dbReference>
<dbReference type="SMR" id="Q5KWI6"/>
<dbReference type="STRING" id="235909.GK2665"/>
<dbReference type="KEGG" id="gka:GK2665"/>
<dbReference type="eggNOG" id="COG0127">
    <property type="taxonomic scope" value="Bacteria"/>
</dbReference>
<dbReference type="HOGENOM" id="CLU_082080_0_2_9"/>
<dbReference type="Proteomes" id="UP000001172">
    <property type="component" value="Chromosome"/>
</dbReference>
<dbReference type="GO" id="GO:0005829">
    <property type="term" value="C:cytosol"/>
    <property type="evidence" value="ECO:0007669"/>
    <property type="project" value="TreeGrafter"/>
</dbReference>
<dbReference type="GO" id="GO:0035870">
    <property type="term" value="F:dITP diphosphatase activity"/>
    <property type="evidence" value="ECO:0007669"/>
    <property type="project" value="RHEA"/>
</dbReference>
<dbReference type="GO" id="GO:0036220">
    <property type="term" value="F:ITP diphosphatase activity"/>
    <property type="evidence" value="ECO:0007669"/>
    <property type="project" value="UniProtKB-EC"/>
</dbReference>
<dbReference type="GO" id="GO:0046872">
    <property type="term" value="F:metal ion binding"/>
    <property type="evidence" value="ECO:0007669"/>
    <property type="project" value="UniProtKB-KW"/>
</dbReference>
<dbReference type="GO" id="GO:0000166">
    <property type="term" value="F:nucleotide binding"/>
    <property type="evidence" value="ECO:0007669"/>
    <property type="project" value="UniProtKB-KW"/>
</dbReference>
<dbReference type="GO" id="GO:0017111">
    <property type="term" value="F:ribonucleoside triphosphate phosphatase activity"/>
    <property type="evidence" value="ECO:0007669"/>
    <property type="project" value="InterPro"/>
</dbReference>
<dbReference type="GO" id="GO:0036222">
    <property type="term" value="F:XTP diphosphatase activity"/>
    <property type="evidence" value="ECO:0007669"/>
    <property type="project" value="RHEA"/>
</dbReference>
<dbReference type="GO" id="GO:0009117">
    <property type="term" value="P:nucleotide metabolic process"/>
    <property type="evidence" value="ECO:0007669"/>
    <property type="project" value="UniProtKB-KW"/>
</dbReference>
<dbReference type="GO" id="GO:0009146">
    <property type="term" value="P:purine nucleoside triphosphate catabolic process"/>
    <property type="evidence" value="ECO:0007669"/>
    <property type="project" value="UniProtKB-UniRule"/>
</dbReference>
<dbReference type="CDD" id="cd00515">
    <property type="entry name" value="HAM1"/>
    <property type="match status" value="1"/>
</dbReference>
<dbReference type="FunFam" id="3.90.950.10:FF:000001">
    <property type="entry name" value="dITP/XTP pyrophosphatase"/>
    <property type="match status" value="1"/>
</dbReference>
<dbReference type="Gene3D" id="3.90.950.10">
    <property type="match status" value="1"/>
</dbReference>
<dbReference type="HAMAP" id="MF_01405">
    <property type="entry name" value="Non_canon_purine_NTPase"/>
    <property type="match status" value="1"/>
</dbReference>
<dbReference type="InterPro" id="IPR020922">
    <property type="entry name" value="dITP/XTP_pyrophosphatase"/>
</dbReference>
<dbReference type="InterPro" id="IPR029001">
    <property type="entry name" value="ITPase-like_fam"/>
</dbReference>
<dbReference type="InterPro" id="IPR002637">
    <property type="entry name" value="RdgB/HAM1"/>
</dbReference>
<dbReference type="NCBIfam" id="NF011397">
    <property type="entry name" value="PRK14822.1"/>
    <property type="match status" value="1"/>
</dbReference>
<dbReference type="NCBIfam" id="TIGR00042">
    <property type="entry name" value="RdgB/HAM1 family non-canonical purine NTP pyrophosphatase"/>
    <property type="match status" value="1"/>
</dbReference>
<dbReference type="PANTHER" id="PTHR11067:SF9">
    <property type="entry name" value="INOSINE TRIPHOSPHATE PYROPHOSPHATASE"/>
    <property type="match status" value="1"/>
</dbReference>
<dbReference type="PANTHER" id="PTHR11067">
    <property type="entry name" value="INOSINE TRIPHOSPHATE PYROPHOSPHATASE/HAM1 PROTEIN"/>
    <property type="match status" value="1"/>
</dbReference>
<dbReference type="Pfam" id="PF01725">
    <property type="entry name" value="Ham1p_like"/>
    <property type="match status" value="1"/>
</dbReference>
<dbReference type="SUPFAM" id="SSF52972">
    <property type="entry name" value="ITPase-like"/>
    <property type="match status" value="1"/>
</dbReference>
<keyword id="KW-0378">Hydrolase</keyword>
<keyword id="KW-0460">Magnesium</keyword>
<keyword id="KW-0479">Metal-binding</keyword>
<keyword id="KW-0546">Nucleotide metabolism</keyword>
<keyword id="KW-0547">Nucleotide-binding</keyword>
<keyword id="KW-1185">Reference proteome</keyword>
<sequence>MKEIVIATKNAGKVREFAALFAKRGVEVKSLLDFPDAPDVAETGSTFAENAVLKAEAASRRLKRPVIADDSGLVVDALGGRPGVHSARYAGEDKNDARNIAKLLRELDGVPMEQRTARFHCALAVAIPGRPTAVVEATCDGYIAEAPRGEGGFGYDPVFYLPERGKTMAELAPEEKNQISHRAKALTKLDEQWEEIVGGKGRTE</sequence>
<reference key="1">
    <citation type="journal article" date="2004" name="Nucleic Acids Res.">
        <title>Thermoadaptation trait revealed by the genome sequence of thermophilic Geobacillus kaustophilus.</title>
        <authorList>
            <person name="Takami H."/>
            <person name="Takaki Y."/>
            <person name="Chee G.-J."/>
            <person name="Nishi S."/>
            <person name="Shimamura S."/>
            <person name="Suzuki H."/>
            <person name="Matsui S."/>
            <person name="Uchiyama I."/>
        </authorList>
    </citation>
    <scope>NUCLEOTIDE SEQUENCE [LARGE SCALE GENOMIC DNA]</scope>
    <source>
        <strain>HTA426</strain>
    </source>
</reference>
<organism>
    <name type="scientific">Geobacillus kaustophilus (strain HTA426)</name>
    <dbReference type="NCBI Taxonomy" id="235909"/>
    <lineage>
        <taxon>Bacteria</taxon>
        <taxon>Bacillati</taxon>
        <taxon>Bacillota</taxon>
        <taxon>Bacilli</taxon>
        <taxon>Bacillales</taxon>
        <taxon>Anoxybacillaceae</taxon>
        <taxon>Geobacillus</taxon>
        <taxon>Geobacillus thermoleovorans group</taxon>
    </lineage>
</organism>
<protein>
    <recommendedName>
        <fullName evidence="1">dITP/XTP pyrophosphatase</fullName>
        <ecNumber evidence="1">3.6.1.66</ecNumber>
    </recommendedName>
    <alternativeName>
        <fullName evidence="1">Non-canonical purine NTP pyrophosphatase</fullName>
    </alternativeName>
    <alternativeName>
        <fullName evidence="1">Non-standard purine NTP pyrophosphatase</fullName>
    </alternativeName>
    <alternativeName>
        <fullName evidence="1">Nucleoside-triphosphate diphosphatase</fullName>
    </alternativeName>
    <alternativeName>
        <fullName evidence="1">Nucleoside-triphosphate pyrophosphatase</fullName>
        <shortName evidence="1">NTPase</shortName>
    </alternativeName>
</protein>